<sequence>GPLNAQHQS</sequence>
<protein>
    <recommendedName>
        <fullName>66 kDa cell wall protein</fullName>
    </recommendedName>
</protein>
<comment type="subcellular location">
    <subcellularLocation>
        <location evidence="1">Secreted</location>
        <location evidence="1">Cell wall</location>
    </subcellularLocation>
</comment>
<dbReference type="GO" id="GO:0005576">
    <property type="term" value="C:extracellular region"/>
    <property type="evidence" value="ECO:0007669"/>
    <property type="project" value="UniProtKB-KW"/>
</dbReference>
<proteinExistence type="evidence at protein level"/>
<feature type="chain" id="PRO_0000079620" description="66 kDa cell wall protein">
    <location>
        <begin position="1"/>
        <end position="9" status="greater than"/>
    </location>
</feature>
<feature type="non-terminal residue" evidence="2">
    <location>
        <position position="9"/>
    </location>
</feature>
<keyword id="KW-0134">Cell wall</keyword>
<keyword id="KW-0903">Direct protein sequencing</keyword>
<keyword id="KW-0964">Secreted</keyword>
<name>CWP01_DAUCA</name>
<reference evidence="3" key="1">
    <citation type="journal article" date="1997" name="J. Biol. Chem.">
        <title>Differential extraction and protein sequencing reveals major differences in patterns of primary cell wall proteins from plants.</title>
        <authorList>
            <person name="Robertson D."/>
            <person name="Mitchell G.P."/>
            <person name="Gilroy J.S."/>
            <person name="Gerrish C."/>
            <person name="Bolwell G.P."/>
            <person name="Slabas A.R."/>
        </authorList>
    </citation>
    <scope>PROTEIN SEQUENCE</scope>
    <scope>SUBCELLULAR LOCATION</scope>
</reference>
<evidence type="ECO:0000269" key="1">
    <source>
    </source>
</evidence>
<evidence type="ECO:0000303" key="2">
    <source>
    </source>
</evidence>
<evidence type="ECO:0000305" key="3"/>
<organism>
    <name type="scientific">Daucus carota</name>
    <name type="common">Wild carrot</name>
    <dbReference type="NCBI Taxonomy" id="4039"/>
    <lineage>
        <taxon>Eukaryota</taxon>
        <taxon>Viridiplantae</taxon>
        <taxon>Streptophyta</taxon>
        <taxon>Embryophyta</taxon>
        <taxon>Tracheophyta</taxon>
        <taxon>Spermatophyta</taxon>
        <taxon>Magnoliopsida</taxon>
        <taxon>eudicotyledons</taxon>
        <taxon>Gunneridae</taxon>
        <taxon>Pentapetalae</taxon>
        <taxon>asterids</taxon>
        <taxon>campanulids</taxon>
        <taxon>Apiales</taxon>
        <taxon>Apiaceae</taxon>
        <taxon>Apioideae</taxon>
        <taxon>Scandiceae</taxon>
        <taxon>Daucinae</taxon>
        <taxon>Daucus</taxon>
        <taxon>Daucus sect. Daucus</taxon>
    </lineage>
</organism>
<accession>P80751</accession>